<dbReference type="EC" id="1.3.5.-" evidence="1"/>
<dbReference type="EMBL" id="BX571662">
    <property type="protein sequence ID" value="CAE10931.1"/>
    <property type="molecule type" value="Genomic_DNA"/>
</dbReference>
<dbReference type="RefSeq" id="WP_011139714.1">
    <property type="nucleotide sequence ID" value="NC_005090.1"/>
</dbReference>
<dbReference type="SMR" id="Q7M825"/>
<dbReference type="STRING" id="273121.WS1922"/>
<dbReference type="KEGG" id="wsu:WS1922"/>
<dbReference type="eggNOG" id="COG2048">
    <property type="taxonomic scope" value="Bacteria"/>
</dbReference>
<dbReference type="HOGENOM" id="CLU_052147_1_0_7"/>
<dbReference type="Proteomes" id="UP000000422">
    <property type="component" value="Chromosome"/>
</dbReference>
<dbReference type="GO" id="GO:0042597">
    <property type="term" value="C:periplasmic space"/>
    <property type="evidence" value="ECO:0007669"/>
    <property type="project" value="UniProtKB-SubCell"/>
</dbReference>
<dbReference type="GO" id="GO:0005886">
    <property type="term" value="C:plasma membrane"/>
    <property type="evidence" value="ECO:0007669"/>
    <property type="project" value="UniProtKB-SubCell"/>
</dbReference>
<dbReference type="GO" id="GO:0016491">
    <property type="term" value="F:oxidoreductase activity"/>
    <property type="evidence" value="ECO:0007669"/>
    <property type="project" value="UniProtKB-KW"/>
</dbReference>
<dbReference type="Gene3D" id="1.20.1050.140">
    <property type="match status" value="1"/>
</dbReference>
<dbReference type="Gene3D" id="3.40.50.11810">
    <property type="match status" value="1"/>
</dbReference>
<dbReference type="InterPro" id="IPR004017">
    <property type="entry name" value="Cys_rich_dom"/>
</dbReference>
<dbReference type="InterPro" id="IPR051278">
    <property type="entry name" value="HdrB/HdrD_reductase"/>
</dbReference>
<dbReference type="InterPro" id="IPR049951">
    <property type="entry name" value="SdhE"/>
</dbReference>
<dbReference type="NCBIfam" id="NF042965">
    <property type="entry name" value="MFR_anch_SdhE"/>
    <property type="match status" value="1"/>
</dbReference>
<dbReference type="PANTHER" id="PTHR42947">
    <property type="entry name" value="COB--COM HETERODISULFIDE REDUCTASE SUBUNIT B 1"/>
    <property type="match status" value="1"/>
</dbReference>
<dbReference type="PANTHER" id="PTHR42947:SF1">
    <property type="entry name" value="COB--COM HETERODISULFIDE REDUCTASE SUBUNIT B 1"/>
    <property type="match status" value="1"/>
</dbReference>
<dbReference type="Pfam" id="PF02754">
    <property type="entry name" value="CCG"/>
    <property type="match status" value="2"/>
</dbReference>
<reference key="1">
    <citation type="journal article" date="2003" name="Proc. Natl. Acad. Sci. U.S.A.">
        <title>Complete genome sequence and analysis of Wolinella succinogenes.</title>
        <authorList>
            <person name="Baar C."/>
            <person name="Eppinger M."/>
            <person name="Raddatz G."/>
            <person name="Simon J."/>
            <person name="Lanz C."/>
            <person name="Klimmek O."/>
            <person name="Nandakumar R."/>
            <person name="Gross R."/>
            <person name="Rosinus A."/>
            <person name="Keller H."/>
            <person name="Jagtap P."/>
            <person name="Linke B."/>
            <person name="Meyer F."/>
            <person name="Lederer H."/>
            <person name="Schuster S.C."/>
        </authorList>
    </citation>
    <scope>NUCLEOTIDE SEQUENCE [LARGE SCALE GENOMIC DNA]</scope>
    <source>
        <strain>ATCC 29543 / DSM 1740 / CCUG 13145 / JCM 31913 / LMG 7466 / NCTC 11488 / FDC 602W</strain>
    </source>
</reference>
<reference key="2">
    <citation type="journal article" date="2009" name="Mol. Microbiol.">
        <title>Production, characterization and determination of the real catalytic properties of the putative 'succinate dehydrogenase' from Wolinella succinogenes.</title>
        <authorList>
            <person name="Juhnke H.D."/>
            <person name="Hiltscher H."/>
            <person name="Nasiri H.R."/>
            <person name="Schwalbe H."/>
            <person name="Lancaster C.R."/>
        </authorList>
    </citation>
    <scope>FUNCTION</scope>
    <scope>CATALYTIC ACTIVITY</scope>
    <scope>SUBCELLULAR LOCATION</scope>
    <scope>SUBUNIT</scope>
    <scope>IDENTIFICATION BY MASS SPECTROMETRY</scope>
    <source>
        <strain>ATCC 29543 / DSM 1740 / CCUG 13145 / JCM 31913 / LMG 7466 / NCTC 11488 / FDC 602W</strain>
    </source>
</reference>
<sequence>MQKEFAFFPGCVLSQAAIESKKSIEAIAPVLGIKLREIEGWSCCGASQAQCVDPLATLVANARNLALAEQMNLPVLTTCSTCLLMLTRAKAELDRGAKDQINSFLAKGNMSYQGTSEVTSLLWVLAQNVEELKSKVKKPLSNLKVAVFYGCHSLRPEKDLGFESSTNPTSFETIVKALGAQVVPFEKRLNCCGFHAVYPAESSAMKMTSGIINTAAKSEAHCVVTPCPLCQMQLDIYQEDAQKIAKSKERVPVLHLSQLVGLALGIPAKELGLNHNVIDATKLG</sequence>
<proteinExistence type="evidence at protein level"/>
<feature type="chain" id="PRO_0000437542" description="8-methylmenaquinol:fumarate reductase membrane anchor subunit">
    <location>
        <begin position="1"/>
        <end position="284"/>
    </location>
</feature>
<evidence type="ECO:0000269" key="1">
    <source>
    </source>
</evidence>
<evidence type="ECO:0000303" key="2">
    <source>
    </source>
</evidence>
<evidence type="ECO:0000305" key="3">
    <source>
    </source>
</evidence>
<evidence type="ECO:0000312" key="4">
    <source>
        <dbReference type="EMBL" id="CAE10931.1"/>
    </source>
</evidence>
<keyword id="KW-1003">Cell membrane</keyword>
<keyword id="KW-0249">Electron transport</keyword>
<keyword id="KW-0472">Membrane</keyword>
<keyword id="KW-0560">Oxidoreductase</keyword>
<keyword id="KW-0574">Periplasm</keyword>
<keyword id="KW-1185">Reference proteome</keyword>
<keyword id="KW-0813">Transport</keyword>
<organism>
    <name type="scientific">Wolinella succinogenes (strain ATCC 29543 / DSM 1740 / CCUG 13145 / JCM 31913 / LMG 7466 / NCTC 11488 / FDC 602W)</name>
    <name type="common">Vibrio succinogenes</name>
    <dbReference type="NCBI Taxonomy" id="273121"/>
    <lineage>
        <taxon>Bacteria</taxon>
        <taxon>Pseudomonadati</taxon>
        <taxon>Campylobacterota</taxon>
        <taxon>Epsilonproteobacteria</taxon>
        <taxon>Campylobacterales</taxon>
        <taxon>Helicobacteraceae</taxon>
        <taxon>Wolinella</taxon>
    </lineage>
</organism>
<name>MFRE_WOLSU</name>
<protein>
    <recommendedName>
        <fullName evidence="2">8-methylmenaquinol:fumarate reductase membrane anchor subunit</fullName>
        <shortName evidence="2">MFR membrane anchor subunit</shortName>
        <ecNumber evidence="1">1.3.5.-</ecNumber>
    </recommendedName>
</protein>
<comment type="function">
    <text evidence="1">Membrane anchor subunit of 8-methylmenaquinol:fumarate reductase (MFR), that catalyzes the reduction of fumarate using 8-methylmenaquinol-6 as electron donor. The complex shows no succinate oxidation activity. Is involved in anaerobic metabolism. SdhE likely contains the quinol/quinone binding site.</text>
</comment>
<comment type="catalytic activity">
    <reaction evidence="1">
        <text>8-methylmenaquinone-6 + succinate = 8-methylmenaquinol-6 + fumarate</text>
        <dbReference type="Rhea" id="RHEA:51848"/>
        <dbReference type="ChEBI" id="CHEBI:29806"/>
        <dbReference type="ChEBI" id="CHEBI:30031"/>
        <dbReference type="ChEBI" id="CHEBI:134356"/>
        <dbReference type="ChEBI" id="CHEBI:134357"/>
    </reaction>
</comment>
<comment type="subunit">
    <text evidence="1">The MFR complex is composed of three subunits: a flavoprotein (SdhA), an iron-sulfur protein (SdhB), and one hydrophobic anchor protein (SdhE).</text>
</comment>
<comment type="subcellular location">
    <subcellularLocation>
        <location evidence="1">Periplasm</location>
    </subcellularLocation>
    <subcellularLocation>
        <location evidence="1">Cell membrane</location>
        <topology evidence="3">Peripheral membrane protein</topology>
        <orientation evidence="1">Periplasmic side</orientation>
    </subcellularLocation>
    <text evidence="3">Membrane association is most likely mediated via amphipathic helices.</text>
</comment>
<gene>
    <name evidence="2" type="primary">sdhE</name>
    <name evidence="4" type="synonym">sdhC</name>
    <name evidence="4" type="ordered locus">WS1922</name>
</gene>
<accession>Q7M825</accession>